<dbReference type="EC" id="2.3.2.6" evidence="1"/>
<dbReference type="EMBL" id="AL513382">
    <property type="protein sequence ID" value="CAD05355.1"/>
    <property type="molecule type" value="Genomic_DNA"/>
</dbReference>
<dbReference type="EMBL" id="AE014613">
    <property type="protein sequence ID" value="AAO69592.1"/>
    <property type="molecule type" value="Genomic_DNA"/>
</dbReference>
<dbReference type="RefSeq" id="NP_455443.1">
    <property type="nucleotide sequence ID" value="NC_003198.1"/>
</dbReference>
<dbReference type="RefSeq" id="WP_001241650.1">
    <property type="nucleotide sequence ID" value="NZ_WSUR01000019.1"/>
</dbReference>
<dbReference type="SMR" id="P67614"/>
<dbReference type="STRING" id="220341.gene:17584946"/>
<dbReference type="KEGG" id="stt:t1979"/>
<dbReference type="KEGG" id="sty:STY0953"/>
<dbReference type="PATRIC" id="fig|220341.7.peg.961"/>
<dbReference type="eggNOG" id="COG2360">
    <property type="taxonomic scope" value="Bacteria"/>
</dbReference>
<dbReference type="HOGENOM" id="CLU_075045_0_0_6"/>
<dbReference type="OMA" id="YRQGIFP"/>
<dbReference type="Proteomes" id="UP000000541">
    <property type="component" value="Chromosome"/>
</dbReference>
<dbReference type="Proteomes" id="UP000002670">
    <property type="component" value="Chromosome"/>
</dbReference>
<dbReference type="GO" id="GO:0005737">
    <property type="term" value="C:cytoplasm"/>
    <property type="evidence" value="ECO:0007669"/>
    <property type="project" value="UniProtKB-SubCell"/>
</dbReference>
<dbReference type="GO" id="GO:0008914">
    <property type="term" value="F:leucyl-tRNA--protein transferase activity"/>
    <property type="evidence" value="ECO:0007669"/>
    <property type="project" value="UniProtKB-UniRule"/>
</dbReference>
<dbReference type="GO" id="GO:0030163">
    <property type="term" value="P:protein catabolic process"/>
    <property type="evidence" value="ECO:0007669"/>
    <property type="project" value="UniProtKB-UniRule"/>
</dbReference>
<dbReference type="FunFam" id="3.30.70.3550:FF:000001">
    <property type="entry name" value="Leucyl/phenylalanyl-tRNA--protein transferase"/>
    <property type="match status" value="1"/>
</dbReference>
<dbReference type="FunFam" id="3.40.630.70:FF:000001">
    <property type="entry name" value="Leucyl/phenylalanyl-tRNA--protein transferase"/>
    <property type="match status" value="1"/>
</dbReference>
<dbReference type="Gene3D" id="3.40.630.70">
    <property type="entry name" value="Leucyl/phenylalanyl-tRNA-protein transferase, C-terminal domain"/>
    <property type="match status" value="1"/>
</dbReference>
<dbReference type="Gene3D" id="3.30.70.3550">
    <property type="entry name" value="Leucyl/phenylalanyl-tRNA-protein transferase, N-terminal domain"/>
    <property type="match status" value="1"/>
</dbReference>
<dbReference type="HAMAP" id="MF_00688">
    <property type="entry name" value="Leu_Phe_trans"/>
    <property type="match status" value="1"/>
</dbReference>
<dbReference type="InterPro" id="IPR016181">
    <property type="entry name" value="Acyl_CoA_acyltransferase"/>
</dbReference>
<dbReference type="InterPro" id="IPR004616">
    <property type="entry name" value="Leu/Phe-tRNA_Trfase"/>
</dbReference>
<dbReference type="InterPro" id="IPR042203">
    <property type="entry name" value="Leu/Phe-tRNA_Trfase_C"/>
</dbReference>
<dbReference type="InterPro" id="IPR042221">
    <property type="entry name" value="Leu/Phe-tRNA_Trfase_N"/>
</dbReference>
<dbReference type="NCBIfam" id="TIGR00667">
    <property type="entry name" value="aat"/>
    <property type="match status" value="1"/>
</dbReference>
<dbReference type="PANTHER" id="PTHR30098">
    <property type="entry name" value="LEUCYL/PHENYLALANYL-TRNA--PROTEIN TRANSFERASE"/>
    <property type="match status" value="1"/>
</dbReference>
<dbReference type="PANTHER" id="PTHR30098:SF2">
    <property type="entry name" value="LEUCYL_PHENYLALANYL-TRNA--PROTEIN TRANSFERASE"/>
    <property type="match status" value="1"/>
</dbReference>
<dbReference type="Pfam" id="PF03588">
    <property type="entry name" value="Leu_Phe_trans"/>
    <property type="match status" value="1"/>
</dbReference>
<dbReference type="SUPFAM" id="SSF55729">
    <property type="entry name" value="Acyl-CoA N-acyltransferases (Nat)"/>
    <property type="match status" value="1"/>
</dbReference>
<protein>
    <recommendedName>
        <fullName evidence="1">Leucyl/phenylalanyl-tRNA--protein transferase</fullName>
        <ecNumber evidence="1">2.3.2.6</ecNumber>
    </recommendedName>
    <alternativeName>
        <fullName evidence="1">L/F-transferase</fullName>
    </alternativeName>
    <alternativeName>
        <fullName evidence="1">Leucyltransferase</fullName>
    </alternativeName>
    <alternativeName>
        <fullName evidence="1">Phenyalanyltransferase</fullName>
    </alternativeName>
</protein>
<sequence length="234" mass="26673">MRLVQLSRHSIAFPSPEGALREPNGLLALGGDLSPARLLMAYQHGIFPWFSPGDPILWWSPDPRAVLWPEKFHLSRSMKRFHNASPYRVTLNYAFDRVIDGCANHRDEGTWITRGIEEAYRRLHELGHAHSIEVWRDRELVGGMYGVSQGALFCGESMFSRQENASKTALLVFCAEFTRHGGKLIDCQVLNSHTASLGAIEIPRRDYLDHLAALRQQPLASRFWVPRTLFLPRK</sequence>
<reference key="1">
    <citation type="journal article" date="2001" name="Nature">
        <title>Complete genome sequence of a multiple drug resistant Salmonella enterica serovar Typhi CT18.</title>
        <authorList>
            <person name="Parkhill J."/>
            <person name="Dougan G."/>
            <person name="James K.D."/>
            <person name="Thomson N.R."/>
            <person name="Pickard D."/>
            <person name="Wain J."/>
            <person name="Churcher C.M."/>
            <person name="Mungall K.L."/>
            <person name="Bentley S.D."/>
            <person name="Holden M.T.G."/>
            <person name="Sebaihia M."/>
            <person name="Baker S."/>
            <person name="Basham D."/>
            <person name="Brooks K."/>
            <person name="Chillingworth T."/>
            <person name="Connerton P."/>
            <person name="Cronin A."/>
            <person name="Davis P."/>
            <person name="Davies R.M."/>
            <person name="Dowd L."/>
            <person name="White N."/>
            <person name="Farrar J."/>
            <person name="Feltwell T."/>
            <person name="Hamlin N."/>
            <person name="Haque A."/>
            <person name="Hien T.T."/>
            <person name="Holroyd S."/>
            <person name="Jagels K."/>
            <person name="Krogh A."/>
            <person name="Larsen T.S."/>
            <person name="Leather S."/>
            <person name="Moule S."/>
            <person name="O'Gaora P."/>
            <person name="Parry C."/>
            <person name="Quail M.A."/>
            <person name="Rutherford K.M."/>
            <person name="Simmonds M."/>
            <person name="Skelton J."/>
            <person name="Stevens K."/>
            <person name="Whitehead S."/>
            <person name="Barrell B.G."/>
        </authorList>
    </citation>
    <scope>NUCLEOTIDE SEQUENCE [LARGE SCALE GENOMIC DNA]</scope>
    <source>
        <strain>CT18</strain>
    </source>
</reference>
<reference key="2">
    <citation type="journal article" date="2003" name="J. Bacteriol.">
        <title>Comparative genomics of Salmonella enterica serovar Typhi strains Ty2 and CT18.</title>
        <authorList>
            <person name="Deng W."/>
            <person name="Liou S.-R."/>
            <person name="Plunkett G. III"/>
            <person name="Mayhew G.F."/>
            <person name="Rose D.J."/>
            <person name="Burland V."/>
            <person name="Kodoyianni V."/>
            <person name="Schwartz D.C."/>
            <person name="Blattner F.R."/>
        </authorList>
    </citation>
    <scope>NUCLEOTIDE SEQUENCE [LARGE SCALE GENOMIC DNA]</scope>
    <source>
        <strain>ATCC 700931 / Ty2</strain>
    </source>
</reference>
<gene>
    <name evidence="1" type="primary">aat</name>
    <name type="ordered locus">STY0953</name>
    <name type="ordered locus">t1979</name>
</gene>
<accession>P67614</accession>
<accession>Q8XEV8</accession>
<name>LFTR_SALTI</name>
<evidence type="ECO:0000255" key="1">
    <source>
        <dbReference type="HAMAP-Rule" id="MF_00688"/>
    </source>
</evidence>
<comment type="function">
    <text evidence="1">Functions in the N-end rule pathway of protein degradation where it conjugates Leu, Phe and, less efficiently, Met from aminoacyl-tRNAs to the N-termini of proteins containing an N-terminal arginine or lysine.</text>
</comment>
<comment type="catalytic activity">
    <reaction evidence="1">
        <text>N-terminal L-lysyl-[protein] + L-leucyl-tRNA(Leu) = N-terminal L-leucyl-L-lysyl-[protein] + tRNA(Leu) + H(+)</text>
        <dbReference type="Rhea" id="RHEA:12340"/>
        <dbReference type="Rhea" id="RHEA-COMP:9613"/>
        <dbReference type="Rhea" id="RHEA-COMP:9622"/>
        <dbReference type="Rhea" id="RHEA-COMP:12670"/>
        <dbReference type="Rhea" id="RHEA-COMP:12671"/>
        <dbReference type="ChEBI" id="CHEBI:15378"/>
        <dbReference type="ChEBI" id="CHEBI:65249"/>
        <dbReference type="ChEBI" id="CHEBI:78442"/>
        <dbReference type="ChEBI" id="CHEBI:78494"/>
        <dbReference type="ChEBI" id="CHEBI:133043"/>
        <dbReference type="EC" id="2.3.2.6"/>
    </reaction>
</comment>
<comment type="catalytic activity">
    <reaction evidence="1">
        <text>N-terminal L-arginyl-[protein] + L-leucyl-tRNA(Leu) = N-terminal L-leucyl-L-arginyl-[protein] + tRNA(Leu) + H(+)</text>
        <dbReference type="Rhea" id="RHEA:50416"/>
        <dbReference type="Rhea" id="RHEA-COMP:9613"/>
        <dbReference type="Rhea" id="RHEA-COMP:9622"/>
        <dbReference type="Rhea" id="RHEA-COMP:12672"/>
        <dbReference type="Rhea" id="RHEA-COMP:12673"/>
        <dbReference type="ChEBI" id="CHEBI:15378"/>
        <dbReference type="ChEBI" id="CHEBI:64719"/>
        <dbReference type="ChEBI" id="CHEBI:78442"/>
        <dbReference type="ChEBI" id="CHEBI:78494"/>
        <dbReference type="ChEBI" id="CHEBI:133044"/>
        <dbReference type="EC" id="2.3.2.6"/>
    </reaction>
</comment>
<comment type="catalytic activity">
    <reaction evidence="1">
        <text>L-phenylalanyl-tRNA(Phe) + an N-terminal L-alpha-aminoacyl-[protein] = an N-terminal L-phenylalanyl-L-alpha-aminoacyl-[protein] + tRNA(Phe)</text>
        <dbReference type="Rhea" id="RHEA:43632"/>
        <dbReference type="Rhea" id="RHEA-COMP:9668"/>
        <dbReference type="Rhea" id="RHEA-COMP:9699"/>
        <dbReference type="Rhea" id="RHEA-COMP:10636"/>
        <dbReference type="Rhea" id="RHEA-COMP:10637"/>
        <dbReference type="ChEBI" id="CHEBI:78442"/>
        <dbReference type="ChEBI" id="CHEBI:78531"/>
        <dbReference type="ChEBI" id="CHEBI:78597"/>
        <dbReference type="ChEBI" id="CHEBI:83561"/>
        <dbReference type="EC" id="2.3.2.6"/>
    </reaction>
</comment>
<comment type="subcellular location">
    <subcellularLocation>
        <location evidence="1">Cytoplasm</location>
    </subcellularLocation>
</comment>
<comment type="similarity">
    <text evidence="1">Belongs to the L/F-transferase family.</text>
</comment>
<organism>
    <name type="scientific">Salmonella typhi</name>
    <dbReference type="NCBI Taxonomy" id="90370"/>
    <lineage>
        <taxon>Bacteria</taxon>
        <taxon>Pseudomonadati</taxon>
        <taxon>Pseudomonadota</taxon>
        <taxon>Gammaproteobacteria</taxon>
        <taxon>Enterobacterales</taxon>
        <taxon>Enterobacteriaceae</taxon>
        <taxon>Salmonella</taxon>
    </lineage>
</organism>
<proteinExistence type="inferred from homology"/>
<feature type="chain" id="PRO_0000207241" description="Leucyl/phenylalanyl-tRNA--protein transferase">
    <location>
        <begin position="1"/>
        <end position="234"/>
    </location>
</feature>
<keyword id="KW-0012">Acyltransferase</keyword>
<keyword id="KW-0963">Cytoplasm</keyword>
<keyword id="KW-0808">Transferase</keyword>